<keyword id="KW-0963">Cytoplasm</keyword>
<keyword id="KW-0342">GTP-binding</keyword>
<keyword id="KW-0436">Ligase</keyword>
<keyword id="KW-0460">Magnesium</keyword>
<keyword id="KW-0479">Metal-binding</keyword>
<keyword id="KW-0547">Nucleotide-binding</keyword>
<keyword id="KW-0658">Purine biosynthesis</keyword>
<keyword id="KW-1185">Reference proteome</keyword>
<gene>
    <name evidence="1" type="primary">purA</name>
    <name type="ordered locus">HPG27_234</name>
</gene>
<comment type="function">
    <text evidence="1">Plays an important role in the de novo pathway of purine nucleotide biosynthesis. Catalyzes the first committed step in the biosynthesis of AMP from IMP.</text>
</comment>
<comment type="catalytic activity">
    <reaction evidence="1">
        <text>IMP + L-aspartate + GTP = N(6)-(1,2-dicarboxyethyl)-AMP + GDP + phosphate + 2 H(+)</text>
        <dbReference type="Rhea" id="RHEA:15753"/>
        <dbReference type="ChEBI" id="CHEBI:15378"/>
        <dbReference type="ChEBI" id="CHEBI:29991"/>
        <dbReference type="ChEBI" id="CHEBI:37565"/>
        <dbReference type="ChEBI" id="CHEBI:43474"/>
        <dbReference type="ChEBI" id="CHEBI:57567"/>
        <dbReference type="ChEBI" id="CHEBI:58053"/>
        <dbReference type="ChEBI" id="CHEBI:58189"/>
        <dbReference type="EC" id="6.3.4.4"/>
    </reaction>
</comment>
<comment type="cofactor">
    <cofactor evidence="1">
        <name>Mg(2+)</name>
        <dbReference type="ChEBI" id="CHEBI:18420"/>
    </cofactor>
    <text evidence="1">Binds 1 Mg(2+) ion per subunit.</text>
</comment>
<comment type="pathway">
    <text evidence="1">Purine metabolism; AMP biosynthesis via de novo pathway; AMP from IMP: step 1/2.</text>
</comment>
<comment type="subunit">
    <text evidence="1">Homodimer.</text>
</comment>
<comment type="subcellular location">
    <subcellularLocation>
        <location evidence="1">Cytoplasm</location>
    </subcellularLocation>
</comment>
<comment type="similarity">
    <text evidence="1">Belongs to the adenylosuccinate synthetase family.</text>
</comment>
<accession>B5ZA21</accession>
<dbReference type="EC" id="6.3.4.4" evidence="1"/>
<dbReference type="EMBL" id="CP001173">
    <property type="protein sequence ID" value="ACI27001.1"/>
    <property type="molecule type" value="Genomic_DNA"/>
</dbReference>
<dbReference type="RefSeq" id="WP_000796172.1">
    <property type="nucleotide sequence ID" value="NC_011333.1"/>
</dbReference>
<dbReference type="SMR" id="B5ZA21"/>
<dbReference type="KEGG" id="hpg:HPG27_234"/>
<dbReference type="HOGENOM" id="CLU_029848_0_0_7"/>
<dbReference type="UniPathway" id="UPA00075">
    <property type="reaction ID" value="UER00335"/>
</dbReference>
<dbReference type="Proteomes" id="UP000001735">
    <property type="component" value="Chromosome"/>
</dbReference>
<dbReference type="GO" id="GO:0005737">
    <property type="term" value="C:cytoplasm"/>
    <property type="evidence" value="ECO:0007669"/>
    <property type="project" value="UniProtKB-SubCell"/>
</dbReference>
<dbReference type="GO" id="GO:0004019">
    <property type="term" value="F:adenylosuccinate synthase activity"/>
    <property type="evidence" value="ECO:0007669"/>
    <property type="project" value="UniProtKB-UniRule"/>
</dbReference>
<dbReference type="GO" id="GO:0005525">
    <property type="term" value="F:GTP binding"/>
    <property type="evidence" value="ECO:0007669"/>
    <property type="project" value="UniProtKB-UniRule"/>
</dbReference>
<dbReference type="GO" id="GO:0000287">
    <property type="term" value="F:magnesium ion binding"/>
    <property type="evidence" value="ECO:0007669"/>
    <property type="project" value="UniProtKB-UniRule"/>
</dbReference>
<dbReference type="GO" id="GO:0044208">
    <property type="term" value="P:'de novo' AMP biosynthetic process"/>
    <property type="evidence" value="ECO:0007669"/>
    <property type="project" value="UniProtKB-UniRule"/>
</dbReference>
<dbReference type="GO" id="GO:0046040">
    <property type="term" value="P:IMP metabolic process"/>
    <property type="evidence" value="ECO:0007669"/>
    <property type="project" value="TreeGrafter"/>
</dbReference>
<dbReference type="CDD" id="cd03108">
    <property type="entry name" value="AdSS"/>
    <property type="match status" value="1"/>
</dbReference>
<dbReference type="FunFam" id="1.10.300.10:FF:000001">
    <property type="entry name" value="Adenylosuccinate synthetase"/>
    <property type="match status" value="1"/>
</dbReference>
<dbReference type="FunFam" id="3.90.170.10:FF:000004">
    <property type="entry name" value="Adenylosuccinate synthetase"/>
    <property type="match status" value="1"/>
</dbReference>
<dbReference type="Gene3D" id="3.40.440.10">
    <property type="entry name" value="Adenylosuccinate Synthetase, subunit A, domain 1"/>
    <property type="match status" value="1"/>
</dbReference>
<dbReference type="Gene3D" id="1.10.300.10">
    <property type="entry name" value="Adenylosuccinate Synthetase, subunit A, domain 2"/>
    <property type="match status" value="1"/>
</dbReference>
<dbReference type="Gene3D" id="3.90.170.10">
    <property type="entry name" value="Adenylosuccinate Synthetase, subunit A, domain 3"/>
    <property type="match status" value="1"/>
</dbReference>
<dbReference type="HAMAP" id="MF_00011">
    <property type="entry name" value="Adenylosucc_synth"/>
    <property type="match status" value="1"/>
</dbReference>
<dbReference type="InterPro" id="IPR018220">
    <property type="entry name" value="Adenylosuccin_syn_GTP-bd"/>
</dbReference>
<dbReference type="InterPro" id="IPR033128">
    <property type="entry name" value="Adenylosuccin_syn_Lys_AS"/>
</dbReference>
<dbReference type="InterPro" id="IPR042109">
    <property type="entry name" value="Adenylosuccinate_synth_dom1"/>
</dbReference>
<dbReference type="InterPro" id="IPR042110">
    <property type="entry name" value="Adenylosuccinate_synth_dom2"/>
</dbReference>
<dbReference type="InterPro" id="IPR042111">
    <property type="entry name" value="Adenylosuccinate_synth_dom3"/>
</dbReference>
<dbReference type="InterPro" id="IPR001114">
    <property type="entry name" value="Adenylosuccinate_synthetase"/>
</dbReference>
<dbReference type="InterPro" id="IPR027417">
    <property type="entry name" value="P-loop_NTPase"/>
</dbReference>
<dbReference type="NCBIfam" id="NF002223">
    <property type="entry name" value="PRK01117.1"/>
    <property type="match status" value="1"/>
</dbReference>
<dbReference type="NCBIfam" id="TIGR00184">
    <property type="entry name" value="purA"/>
    <property type="match status" value="1"/>
</dbReference>
<dbReference type="PANTHER" id="PTHR11846">
    <property type="entry name" value="ADENYLOSUCCINATE SYNTHETASE"/>
    <property type="match status" value="1"/>
</dbReference>
<dbReference type="PANTHER" id="PTHR11846:SF0">
    <property type="entry name" value="ADENYLOSUCCINATE SYNTHETASE"/>
    <property type="match status" value="1"/>
</dbReference>
<dbReference type="Pfam" id="PF00709">
    <property type="entry name" value="Adenylsucc_synt"/>
    <property type="match status" value="1"/>
</dbReference>
<dbReference type="SMART" id="SM00788">
    <property type="entry name" value="Adenylsucc_synt"/>
    <property type="match status" value="1"/>
</dbReference>
<dbReference type="SUPFAM" id="SSF52540">
    <property type="entry name" value="P-loop containing nucleoside triphosphate hydrolases"/>
    <property type="match status" value="1"/>
</dbReference>
<dbReference type="PROSITE" id="PS01266">
    <property type="entry name" value="ADENYLOSUCCIN_SYN_1"/>
    <property type="match status" value="1"/>
</dbReference>
<dbReference type="PROSITE" id="PS00513">
    <property type="entry name" value="ADENYLOSUCCIN_SYN_2"/>
    <property type="match status" value="1"/>
</dbReference>
<evidence type="ECO:0000255" key="1">
    <source>
        <dbReference type="HAMAP-Rule" id="MF_00011"/>
    </source>
</evidence>
<protein>
    <recommendedName>
        <fullName evidence="1">Adenylosuccinate synthetase</fullName>
        <shortName evidence="1">AMPSase</shortName>
        <shortName evidence="1">AdSS</shortName>
        <ecNumber evidence="1">6.3.4.4</ecNumber>
    </recommendedName>
    <alternativeName>
        <fullName evidence="1">IMP--aspartate ligase</fullName>
    </alternativeName>
</protein>
<name>PURA_HELPG</name>
<organism>
    <name type="scientific">Helicobacter pylori (strain G27)</name>
    <dbReference type="NCBI Taxonomy" id="563041"/>
    <lineage>
        <taxon>Bacteria</taxon>
        <taxon>Pseudomonadati</taxon>
        <taxon>Campylobacterota</taxon>
        <taxon>Epsilonproteobacteria</taxon>
        <taxon>Campylobacterales</taxon>
        <taxon>Helicobacteraceae</taxon>
        <taxon>Helicobacter</taxon>
    </lineage>
</organism>
<feature type="chain" id="PRO_1000089302" description="Adenylosuccinate synthetase">
    <location>
        <begin position="1"/>
        <end position="411"/>
    </location>
</feature>
<feature type="active site" description="Proton acceptor" evidence="1">
    <location>
        <position position="12"/>
    </location>
</feature>
<feature type="active site" description="Proton donor" evidence="1">
    <location>
        <position position="40"/>
    </location>
</feature>
<feature type="binding site" evidence="1">
    <location>
        <begin position="11"/>
        <end position="17"/>
    </location>
    <ligand>
        <name>GTP</name>
        <dbReference type="ChEBI" id="CHEBI:37565"/>
    </ligand>
</feature>
<feature type="binding site" description="in other chain" evidence="1">
    <location>
        <begin position="12"/>
        <end position="15"/>
    </location>
    <ligand>
        <name>IMP</name>
        <dbReference type="ChEBI" id="CHEBI:58053"/>
        <note>ligand shared between dimeric partners</note>
    </ligand>
</feature>
<feature type="binding site" evidence="1">
    <location>
        <position position="12"/>
    </location>
    <ligand>
        <name>Mg(2+)</name>
        <dbReference type="ChEBI" id="CHEBI:18420"/>
    </ligand>
</feature>
<feature type="binding site" description="in other chain" evidence="1">
    <location>
        <begin position="37"/>
        <end position="40"/>
    </location>
    <ligand>
        <name>IMP</name>
        <dbReference type="ChEBI" id="CHEBI:58053"/>
        <note>ligand shared between dimeric partners</note>
    </ligand>
</feature>
<feature type="binding site" evidence="1">
    <location>
        <begin position="39"/>
        <end position="41"/>
    </location>
    <ligand>
        <name>GTP</name>
        <dbReference type="ChEBI" id="CHEBI:37565"/>
    </ligand>
</feature>
<feature type="binding site" evidence="1">
    <location>
        <position position="39"/>
    </location>
    <ligand>
        <name>Mg(2+)</name>
        <dbReference type="ChEBI" id="CHEBI:18420"/>
    </ligand>
</feature>
<feature type="binding site" description="in other chain" evidence="1">
    <location>
        <position position="121"/>
    </location>
    <ligand>
        <name>IMP</name>
        <dbReference type="ChEBI" id="CHEBI:58053"/>
        <note>ligand shared between dimeric partners</note>
    </ligand>
</feature>
<feature type="binding site" evidence="1">
    <location>
        <position position="135"/>
    </location>
    <ligand>
        <name>IMP</name>
        <dbReference type="ChEBI" id="CHEBI:58053"/>
        <note>ligand shared between dimeric partners</note>
    </ligand>
</feature>
<feature type="binding site" description="in other chain" evidence="1">
    <location>
        <position position="215"/>
    </location>
    <ligand>
        <name>IMP</name>
        <dbReference type="ChEBI" id="CHEBI:58053"/>
        <note>ligand shared between dimeric partners</note>
    </ligand>
</feature>
<feature type="binding site" description="in other chain" evidence="1">
    <location>
        <position position="230"/>
    </location>
    <ligand>
        <name>IMP</name>
        <dbReference type="ChEBI" id="CHEBI:58053"/>
        <note>ligand shared between dimeric partners</note>
    </ligand>
</feature>
<feature type="binding site" evidence="1">
    <location>
        <begin position="290"/>
        <end position="296"/>
    </location>
    <ligand>
        <name>substrate</name>
    </ligand>
</feature>
<feature type="binding site" description="in other chain" evidence="1">
    <location>
        <position position="294"/>
    </location>
    <ligand>
        <name>IMP</name>
        <dbReference type="ChEBI" id="CHEBI:58053"/>
        <note>ligand shared between dimeric partners</note>
    </ligand>
</feature>
<feature type="binding site" evidence="1">
    <location>
        <position position="296"/>
    </location>
    <ligand>
        <name>GTP</name>
        <dbReference type="ChEBI" id="CHEBI:37565"/>
    </ligand>
</feature>
<feature type="binding site" evidence="1">
    <location>
        <begin position="322"/>
        <end position="324"/>
    </location>
    <ligand>
        <name>GTP</name>
        <dbReference type="ChEBI" id="CHEBI:37565"/>
    </ligand>
</feature>
<feature type="binding site" evidence="1">
    <location>
        <begin position="400"/>
        <end position="402"/>
    </location>
    <ligand>
        <name>GTP</name>
        <dbReference type="ChEBI" id="CHEBI:37565"/>
    </ligand>
</feature>
<reference key="1">
    <citation type="journal article" date="2009" name="J. Bacteriol.">
        <title>The complete genome sequence of Helicobacter pylori strain G27.</title>
        <authorList>
            <person name="Baltrus D.A."/>
            <person name="Amieva M.R."/>
            <person name="Covacci A."/>
            <person name="Lowe T.M."/>
            <person name="Merrell D.S."/>
            <person name="Ottemann K.M."/>
            <person name="Stein M."/>
            <person name="Salama N.R."/>
            <person name="Guillemin K."/>
        </authorList>
    </citation>
    <scope>NUCLEOTIDE SEQUENCE [LARGE SCALE GENOMIC DNA]</scope>
    <source>
        <strain>G27</strain>
    </source>
</reference>
<sequence>MADVVVGIQWGDEGKGKIVDRIAKDYDFVVRYQGGHNAGHTIVHKGVKHSLHLMPSGVLYPKCKNIISSAVVVSVKDLCEEISAFEDLENRLFVSDRAHVILPYHAKKDAFKEKSQNIGTTKKGIGPCYEDKMARSGIRMGDLLDDKILEEKLNAHFKAIEPFKEAYGLGENYEKDLREYFKTYAKKICPFIKDTTSMLIEANQKGEKILLEGAQGTLLDIDLGTYPFVTSSNTTSASACVSTGLNPKAINEVIGITKAYSTRVGNGPFPSEDATPMGDHLRTKGAEFGTTTKRPRRCGWLDLVALKYACALNGCTQLALMKLDVLDGIDAIKVCVAYERKGERLEAFPSDLKDCMPIYQTFKGWEKSVGVRKLEDLEPNAREYVRFIEKEVGVKIGLISTSPEREDTIFL</sequence>
<proteinExistence type="inferred from homology"/>